<keyword id="KW-0446">Lipid-binding</keyword>
<keyword id="KW-1185">Reference proteome</keyword>
<accession>P75312</accession>
<organism>
    <name type="scientific">Mycoplasma pneumoniae (strain ATCC 29342 / M129 / Subtype 1)</name>
    <name type="common">Mycoplasmoides pneumoniae</name>
    <dbReference type="NCBI Taxonomy" id="272634"/>
    <lineage>
        <taxon>Bacteria</taxon>
        <taxon>Bacillati</taxon>
        <taxon>Mycoplasmatota</taxon>
        <taxon>Mycoplasmoidales</taxon>
        <taxon>Mycoplasmoidaceae</taxon>
        <taxon>Mycoplasmoides</taxon>
    </lineage>
</organism>
<proteinExistence type="inferred from homology"/>
<dbReference type="EMBL" id="U00089">
    <property type="protein sequence ID" value="AAB96017.1"/>
    <property type="molecule type" value="Genomic_DNA"/>
</dbReference>
<dbReference type="PIR" id="S73695">
    <property type="entry name" value="S73695"/>
</dbReference>
<dbReference type="RefSeq" id="NP_110160.1">
    <property type="nucleotide sequence ID" value="NC_000912.1"/>
</dbReference>
<dbReference type="RefSeq" id="WP_010874828.1">
    <property type="nucleotide sequence ID" value="NZ_OU342337.1"/>
</dbReference>
<dbReference type="SMR" id="P75312"/>
<dbReference type="IntAct" id="P75312">
    <property type="interactions" value="1"/>
</dbReference>
<dbReference type="STRING" id="272634.MPN_472"/>
<dbReference type="EnsemblBacteria" id="AAB96017">
    <property type="protein sequence ID" value="AAB96017"/>
    <property type="gene ID" value="MPN_472"/>
</dbReference>
<dbReference type="KEGG" id="mpn:MPN_472"/>
<dbReference type="PATRIC" id="fig|272634.6.peg.510"/>
<dbReference type="HOGENOM" id="CLU_048251_4_3_14"/>
<dbReference type="OrthoDB" id="384457at2"/>
<dbReference type="BioCyc" id="MPNE272634:G1GJ3-775-MONOMER"/>
<dbReference type="Proteomes" id="UP000000808">
    <property type="component" value="Chromosome"/>
</dbReference>
<dbReference type="GO" id="GO:0008289">
    <property type="term" value="F:lipid binding"/>
    <property type="evidence" value="ECO:0007669"/>
    <property type="project" value="UniProtKB-KW"/>
</dbReference>
<dbReference type="Gene3D" id="3.30.1180.10">
    <property type="match status" value="1"/>
</dbReference>
<dbReference type="Gene3D" id="3.40.50.10170">
    <property type="match status" value="1"/>
</dbReference>
<dbReference type="InterPro" id="IPR003797">
    <property type="entry name" value="DegV"/>
</dbReference>
<dbReference type="InterPro" id="IPR043168">
    <property type="entry name" value="DegV_C"/>
</dbReference>
<dbReference type="InterPro" id="IPR050270">
    <property type="entry name" value="DegV_domain_contain"/>
</dbReference>
<dbReference type="NCBIfam" id="TIGR00762">
    <property type="entry name" value="DegV"/>
    <property type="match status" value="1"/>
</dbReference>
<dbReference type="PANTHER" id="PTHR33434">
    <property type="entry name" value="DEGV DOMAIN-CONTAINING PROTEIN DR_1986-RELATED"/>
    <property type="match status" value="1"/>
</dbReference>
<dbReference type="PANTHER" id="PTHR33434:SF2">
    <property type="entry name" value="FATTY ACID-BINDING PROTEIN TM_1468"/>
    <property type="match status" value="1"/>
</dbReference>
<dbReference type="Pfam" id="PF02645">
    <property type="entry name" value="DegV"/>
    <property type="match status" value="1"/>
</dbReference>
<dbReference type="SUPFAM" id="SSF82549">
    <property type="entry name" value="DAK1/DegV-like"/>
    <property type="match status" value="1"/>
</dbReference>
<dbReference type="PROSITE" id="PS51482">
    <property type="entry name" value="DEGV"/>
    <property type="match status" value="1"/>
</dbReference>
<name>Y472_MYCPN</name>
<comment type="function">
    <text evidence="1">May bind long-chain fatty acids, such as palmitate, and may play a role in lipid transport or fatty acid metabolism.</text>
</comment>
<evidence type="ECO:0000250" key="1"/>
<evidence type="ECO:0000250" key="2">
    <source>
        <dbReference type="UniProtKB" id="Q9X1H9"/>
    </source>
</evidence>
<evidence type="ECO:0000255" key="3">
    <source>
        <dbReference type="PROSITE-ProRule" id="PRU00815"/>
    </source>
</evidence>
<feature type="chain" id="PRO_0000209774" description="DegV domain-containing protein MG326 homolog">
    <location>
        <begin position="1"/>
        <end position="293"/>
    </location>
</feature>
<feature type="domain" description="DegV" evidence="3">
    <location>
        <begin position="3"/>
        <end position="289"/>
    </location>
</feature>
<feature type="binding site" evidence="2">
    <location>
        <position position="62"/>
    </location>
    <ligand>
        <name>hexadecanoate</name>
        <dbReference type="ChEBI" id="CHEBI:7896"/>
    </ligand>
</feature>
<feature type="binding site" evidence="2">
    <location>
        <position position="94"/>
    </location>
    <ligand>
        <name>hexadecanoate</name>
        <dbReference type="ChEBI" id="CHEBI:7896"/>
    </ligand>
</feature>
<gene>
    <name type="ordered locus">MPN_472</name>
    <name type="ORF">MP369</name>
    <name type="ORF">P01_orf293</name>
</gene>
<reference key="1">
    <citation type="journal article" date="1996" name="Nucleic Acids Res.">
        <title>Complete sequence analysis of the genome of the bacterium Mycoplasma pneumoniae.</title>
        <authorList>
            <person name="Himmelreich R."/>
            <person name="Hilbert H."/>
            <person name="Plagens H."/>
            <person name="Pirkl E."/>
            <person name="Li B.-C."/>
            <person name="Herrmann R."/>
        </authorList>
    </citation>
    <scope>NUCLEOTIDE SEQUENCE [LARGE SCALE GENOMIC DNA]</scope>
    <source>
        <strain>ATCC 29342 / M129 / Subtype 1</strain>
    </source>
</reference>
<protein>
    <recommendedName>
        <fullName>DegV domain-containing protein MG326 homolog</fullName>
    </recommendedName>
</protein>
<sequence length="293" mass="32779">MKTAIITDSTASIKEGEIQDVYVLPLQVIINGQDTYRDGKDIDYDRVYQLLKEHPQGLNISTSLPRQADLIELIEAIKDKYDRFVFLPLSKGLSGTYDMIVQAVKPLSTPKKEFVVLETSDIAISLKWLVQEVKALTDTNCPTKAIAEVVDQHKQSIFTAVTVKNLVQLRKGGRISGLKKIIATLLRVKPIIFFDKGVNTLSGKAFTFVQALEKIFTFVKSKFGDNFKIKRIGFCNAFTPVKAKEVKALILDFLHTNKITLQREIESSFITSAIIAHTGIDAFSISLLLDKNK</sequence>